<name>NOP5C_ARATH</name>
<comment type="function">
    <text evidence="1">Required for 60S ribosomal subunit biogenesis.</text>
</comment>
<comment type="subcellular location">
    <subcellularLocation>
        <location evidence="1">Nucleus</location>
        <location evidence="1">Nucleolus</location>
    </subcellularLocation>
</comment>
<comment type="similarity">
    <text evidence="4">Belongs to the NOP5/NOP56 family.</text>
</comment>
<comment type="sequence caution" evidence="4">
    <conflict type="erroneous gene model prediction">
        <sequence resource="EMBL-CDS" id="AAB61074"/>
    </conflict>
</comment>
<comment type="sequence caution" evidence="4">
    <conflict type="erroneous gene model prediction">
        <sequence resource="EMBL-CDS" id="AED93654"/>
    </conflict>
</comment>
<reference key="1">
    <citation type="journal article" date="2000" name="Nature">
        <title>Sequence and analysis of chromosome 5 of the plant Arabidopsis thaliana.</title>
        <authorList>
            <person name="Tabata S."/>
            <person name="Kaneko T."/>
            <person name="Nakamura Y."/>
            <person name="Kotani H."/>
            <person name="Kato T."/>
            <person name="Asamizu E."/>
            <person name="Miyajima N."/>
            <person name="Sasamoto S."/>
            <person name="Kimura T."/>
            <person name="Hosouchi T."/>
            <person name="Kawashima K."/>
            <person name="Kohara M."/>
            <person name="Matsumoto M."/>
            <person name="Matsuno A."/>
            <person name="Muraki A."/>
            <person name="Nakayama S."/>
            <person name="Nakazaki N."/>
            <person name="Naruo K."/>
            <person name="Okumura S."/>
            <person name="Shinpo S."/>
            <person name="Takeuchi C."/>
            <person name="Wada T."/>
            <person name="Watanabe A."/>
            <person name="Yamada M."/>
            <person name="Yasuda M."/>
            <person name="Sato S."/>
            <person name="de la Bastide M."/>
            <person name="Huang E."/>
            <person name="Spiegel L."/>
            <person name="Gnoj L."/>
            <person name="O'Shaughnessy A."/>
            <person name="Preston R."/>
            <person name="Habermann K."/>
            <person name="Murray J."/>
            <person name="Johnson D."/>
            <person name="Rohlfing T."/>
            <person name="Nelson J."/>
            <person name="Stoneking T."/>
            <person name="Pepin K."/>
            <person name="Spieth J."/>
            <person name="Sekhon M."/>
            <person name="Armstrong J."/>
            <person name="Becker M."/>
            <person name="Belter E."/>
            <person name="Cordum H."/>
            <person name="Cordes M."/>
            <person name="Courtney L."/>
            <person name="Courtney W."/>
            <person name="Dante M."/>
            <person name="Du H."/>
            <person name="Edwards J."/>
            <person name="Fryman J."/>
            <person name="Haakensen B."/>
            <person name="Lamar E."/>
            <person name="Latreille P."/>
            <person name="Leonard S."/>
            <person name="Meyer R."/>
            <person name="Mulvaney E."/>
            <person name="Ozersky P."/>
            <person name="Riley A."/>
            <person name="Strowmatt C."/>
            <person name="Wagner-McPherson C."/>
            <person name="Wollam A."/>
            <person name="Yoakum M."/>
            <person name="Bell M."/>
            <person name="Dedhia N."/>
            <person name="Parnell L."/>
            <person name="Shah R."/>
            <person name="Rodriguez M."/>
            <person name="Hoon See L."/>
            <person name="Vil D."/>
            <person name="Baker J."/>
            <person name="Kirchoff K."/>
            <person name="Toth K."/>
            <person name="King L."/>
            <person name="Bahret A."/>
            <person name="Miller B."/>
            <person name="Marra M.A."/>
            <person name="Martienssen R."/>
            <person name="McCombie W.R."/>
            <person name="Wilson R.K."/>
            <person name="Murphy G."/>
            <person name="Bancroft I."/>
            <person name="Volckaert G."/>
            <person name="Wambutt R."/>
            <person name="Duesterhoeft A."/>
            <person name="Stiekema W."/>
            <person name="Pohl T."/>
            <person name="Entian K.-D."/>
            <person name="Terryn N."/>
            <person name="Hartley N."/>
            <person name="Bent E."/>
            <person name="Johnson S."/>
            <person name="Langham S.-A."/>
            <person name="McCullagh B."/>
            <person name="Robben J."/>
            <person name="Grymonprez B."/>
            <person name="Zimmermann W."/>
            <person name="Ramsperger U."/>
            <person name="Wedler H."/>
            <person name="Balke K."/>
            <person name="Wedler E."/>
            <person name="Peters S."/>
            <person name="van Staveren M."/>
            <person name="Dirkse W."/>
            <person name="Mooijman P."/>
            <person name="Klein Lankhorst R."/>
            <person name="Weitzenegger T."/>
            <person name="Bothe G."/>
            <person name="Rose M."/>
            <person name="Hauf J."/>
            <person name="Berneiser S."/>
            <person name="Hempel S."/>
            <person name="Feldpausch M."/>
            <person name="Lamberth S."/>
            <person name="Villarroel R."/>
            <person name="Gielen J."/>
            <person name="Ardiles W."/>
            <person name="Bents O."/>
            <person name="Lemcke K."/>
            <person name="Kolesov G."/>
            <person name="Mayer K.F.X."/>
            <person name="Rudd S."/>
            <person name="Schoof H."/>
            <person name="Schueller C."/>
            <person name="Zaccaria P."/>
            <person name="Mewes H.-W."/>
            <person name="Bevan M."/>
            <person name="Fransz P.F."/>
        </authorList>
    </citation>
    <scope>NUCLEOTIDE SEQUENCE [LARGE SCALE GENOMIC DNA]</scope>
    <source>
        <strain>cv. Columbia</strain>
    </source>
</reference>
<reference key="2">
    <citation type="journal article" date="2017" name="Plant J.">
        <title>Araport11: a complete reannotation of the Arabidopsis thaliana reference genome.</title>
        <authorList>
            <person name="Cheng C.Y."/>
            <person name="Krishnakumar V."/>
            <person name="Chan A.P."/>
            <person name="Thibaud-Nissen F."/>
            <person name="Schobel S."/>
            <person name="Town C.D."/>
        </authorList>
    </citation>
    <scope>GENOME REANNOTATION</scope>
    <source>
        <strain>cv. Columbia</strain>
    </source>
</reference>
<proteinExistence type="inferred from homology"/>
<organism>
    <name type="scientific">Arabidopsis thaliana</name>
    <name type="common">Mouse-ear cress</name>
    <dbReference type="NCBI Taxonomy" id="3702"/>
    <lineage>
        <taxon>Eukaryota</taxon>
        <taxon>Viridiplantae</taxon>
        <taxon>Streptophyta</taxon>
        <taxon>Embryophyta</taxon>
        <taxon>Tracheophyta</taxon>
        <taxon>Spermatophyta</taxon>
        <taxon>Magnoliopsida</taxon>
        <taxon>eudicotyledons</taxon>
        <taxon>Gunneridae</taxon>
        <taxon>Pentapetalae</taxon>
        <taxon>rosids</taxon>
        <taxon>malvids</taxon>
        <taxon>Brassicales</taxon>
        <taxon>Brassicaceae</taxon>
        <taxon>Camelineae</taxon>
        <taxon>Arabidopsis</taxon>
    </lineage>
</organism>
<gene>
    <name type="primary">NOP5-3</name>
    <name type="synonym">NOP58-3</name>
    <name type="ordered locus">At5g27140</name>
    <name type="ORF">T21B4_50</name>
    <name type="ORF">TM021B04.13</name>
</gene>
<evidence type="ECO:0000250" key="1"/>
<evidence type="ECO:0000255" key="2">
    <source>
        <dbReference type="PROSITE-ProRule" id="PRU00690"/>
    </source>
</evidence>
<evidence type="ECO:0000256" key="3">
    <source>
        <dbReference type="SAM" id="MobiDB-lite"/>
    </source>
</evidence>
<evidence type="ECO:0000305" key="4"/>
<feature type="chain" id="PRO_0000219032" description="Putative nucleolar protein 5-3">
    <location>
        <begin position="1"/>
        <end position="450"/>
    </location>
</feature>
<feature type="domain" description="Nop" evidence="2">
    <location>
        <begin position="252"/>
        <end position="370"/>
    </location>
</feature>
<feature type="region of interest" description="Disordered" evidence="3">
    <location>
        <begin position="375"/>
        <end position="423"/>
    </location>
</feature>
<feature type="compositionally biased region" description="Basic and acidic residues" evidence="3">
    <location>
        <begin position="399"/>
        <end position="423"/>
    </location>
</feature>
<sequence>MLVLFETSGGFALFKVLDEGKLSNVEDLGTEFYSAESARRMGLHKFLKNNCDDGEILAVADPKLGDIITEKLDIECVHNDAVMELLRGVRSQLTELLSGLDDNDLAPVSLELSHILARYKLKITSDKVETMIILSISLLDDLDKELNTYTTSVCELYGLHFPELANIVQDNILYAKVVKLMGNRINAATLDFSEILADEVEAELKEASMVSTRTEVSDLDLMHIQELCDQVLSIAEDKTLLCDDLKNKMNKIAPNLTALVGELVGARLISHCGSLWNLSKLPWSTIQILGAEKTLYKALKTKQATPKYGLIYHAPLVRQAAPENKGKIARSLAAKSALAIRCDAFGNGQDNTMGVESRLKLEARLRNLEGGDLGACEEEEEVNDKDTKKEADDEEEPKTEECSKKRKKEAELETVEDPAKKSKQEGVTGLLLLMLLISLIYFFSVNQLLW</sequence>
<protein>
    <recommendedName>
        <fullName>Putative nucleolar protein 5-3</fullName>
    </recommendedName>
    <alternativeName>
        <fullName>Nucleolar protein 58-3</fullName>
    </alternativeName>
</protein>
<keyword id="KW-0539">Nucleus</keyword>
<keyword id="KW-1185">Reference proteome</keyword>
<keyword id="KW-0690">Ribosome biogenesis</keyword>
<dbReference type="EMBL" id="AF007271">
    <property type="protein sequence ID" value="AAB61074.1"/>
    <property type="status" value="ALT_SEQ"/>
    <property type="molecule type" value="Genomic_DNA"/>
</dbReference>
<dbReference type="EMBL" id="CP002688">
    <property type="protein sequence ID" value="AED93654.1"/>
    <property type="status" value="ALT_SEQ"/>
    <property type="molecule type" value="Genomic_DNA"/>
</dbReference>
<dbReference type="EMBL" id="CP002688">
    <property type="protein sequence ID" value="ANM68536.1"/>
    <property type="molecule type" value="Genomic_DNA"/>
</dbReference>
<dbReference type="PIR" id="T01805">
    <property type="entry name" value="T01805"/>
</dbReference>
<dbReference type="RefSeq" id="NP_001330282.1">
    <property type="nucleotide sequence ID" value="NM_001343993.1"/>
</dbReference>
<dbReference type="RefSeq" id="NP_198066.1">
    <property type="nucleotide sequence ID" value="NM_122596.1"/>
</dbReference>
<dbReference type="SMR" id="O04656"/>
<dbReference type="BioGRID" id="18046">
    <property type="interactions" value="37"/>
</dbReference>
<dbReference type="FunCoup" id="O04656">
    <property type="interactions" value="1733"/>
</dbReference>
<dbReference type="IntAct" id="O04656">
    <property type="interactions" value="1"/>
</dbReference>
<dbReference type="STRING" id="3702.O04656"/>
<dbReference type="PaxDb" id="3702-AT5G27140.1"/>
<dbReference type="ProteomicsDB" id="251070"/>
<dbReference type="EnsemblPlants" id="AT5G27140.2">
    <property type="protein sequence ID" value="AT5G27140.2"/>
    <property type="gene ID" value="AT5G27140"/>
</dbReference>
<dbReference type="GeneID" id="832772"/>
<dbReference type="Gramene" id="AT5G27140.2">
    <property type="protein sequence ID" value="AT5G27140.2"/>
    <property type="gene ID" value="AT5G27140"/>
</dbReference>
<dbReference type="KEGG" id="ath:AT5G27140"/>
<dbReference type="Araport" id="AT5G27140"/>
<dbReference type="TAIR" id="AT5G27140"/>
<dbReference type="eggNOG" id="KOG2572">
    <property type="taxonomic scope" value="Eukaryota"/>
</dbReference>
<dbReference type="HOGENOM" id="CLU_015495_5_2_1"/>
<dbReference type="InParanoid" id="O04656"/>
<dbReference type="PhylomeDB" id="O04656"/>
<dbReference type="PRO" id="PR:O04656"/>
<dbReference type="Proteomes" id="UP000006548">
    <property type="component" value="Chromosome 5"/>
</dbReference>
<dbReference type="ExpressionAtlas" id="O04656">
    <property type="expression patterns" value="baseline and differential"/>
</dbReference>
<dbReference type="GO" id="GO:0031428">
    <property type="term" value="C:box C/D methylation guide snoRNP complex"/>
    <property type="evidence" value="ECO:0007669"/>
    <property type="project" value="InterPro"/>
</dbReference>
<dbReference type="GO" id="GO:0005730">
    <property type="term" value="C:nucleolus"/>
    <property type="evidence" value="ECO:0007669"/>
    <property type="project" value="UniProtKB-SubCell"/>
</dbReference>
<dbReference type="GO" id="GO:0032040">
    <property type="term" value="C:small-subunit processome"/>
    <property type="evidence" value="ECO:0007669"/>
    <property type="project" value="InterPro"/>
</dbReference>
<dbReference type="GO" id="GO:0030515">
    <property type="term" value="F:snoRNA binding"/>
    <property type="evidence" value="ECO:0007669"/>
    <property type="project" value="InterPro"/>
</dbReference>
<dbReference type="GO" id="GO:0042254">
    <property type="term" value="P:ribosome biogenesis"/>
    <property type="evidence" value="ECO:0007669"/>
    <property type="project" value="UniProtKB-KW"/>
</dbReference>
<dbReference type="FunFam" id="1.10.246.90:FF:000005">
    <property type="entry name" value="Nucleolar protein 5, putative"/>
    <property type="match status" value="1"/>
</dbReference>
<dbReference type="Gene3D" id="1.10.287.4070">
    <property type="match status" value="1"/>
</dbReference>
<dbReference type="Gene3D" id="1.10.246.90">
    <property type="entry name" value="Nop domain"/>
    <property type="match status" value="1"/>
</dbReference>
<dbReference type="InterPro" id="IPR045056">
    <property type="entry name" value="Nop56/Nop58"/>
</dbReference>
<dbReference type="InterPro" id="IPR042239">
    <property type="entry name" value="Nop_C"/>
</dbReference>
<dbReference type="InterPro" id="IPR002687">
    <property type="entry name" value="Nop_dom"/>
</dbReference>
<dbReference type="InterPro" id="IPR036070">
    <property type="entry name" value="Nop_dom_sf"/>
</dbReference>
<dbReference type="InterPro" id="IPR012976">
    <property type="entry name" value="NOSIC"/>
</dbReference>
<dbReference type="PANTHER" id="PTHR10894">
    <property type="entry name" value="NUCLEOLAR PROTEIN 5 NUCLEOLAR PROTEIN NOP5 NOP58"/>
    <property type="match status" value="1"/>
</dbReference>
<dbReference type="PANTHER" id="PTHR10894:SF1">
    <property type="entry name" value="NUCLEOLAR PROTEIN 58"/>
    <property type="match status" value="1"/>
</dbReference>
<dbReference type="Pfam" id="PF01798">
    <property type="entry name" value="Nop"/>
    <property type="match status" value="1"/>
</dbReference>
<dbReference type="SMART" id="SM00931">
    <property type="entry name" value="NOSIC"/>
    <property type="match status" value="1"/>
</dbReference>
<dbReference type="SUPFAM" id="SSF89124">
    <property type="entry name" value="Nop domain"/>
    <property type="match status" value="1"/>
</dbReference>
<dbReference type="PROSITE" id="PS51358">
    <property type="entry name" value="NOP"/>
    <property type="match status" value="1"/>
</dbReference>
<accession>O04656</accession>
<accession>F4K2U4</accession>